<comment type="function">
    <text evidence="1">Attaches a formyl group to the free amino group of methionyl-tRNA(fMet). The formyl group appears to play a dual role in the initiator identity of N-formylmethionyl-tRNA by promoting its recognition by IF2 and preventing the misappropriation of this tRNA by the elongation apparatus.</text>
</comment>
<comment type="catalytic activity">
    <reaction evidence="1">
        <text>L-methionyl-tRNA(fMet) + (6R)-10-formyltetrahydrofolate = N-formyl-L-methionyl-tRNA(fMet) + (6S)-5,6,7,8-tetrahydrofolate + H(+)</text>
        <dbReference type="Rhea" id="RHEA:24380"/>
        <dbReference type="Rhea" id="RHEA-COMP:9952"/>
        <dbReference type="Rhea" id="RHEA-COMP:9953"/>
        <dbReference type="ChEBI" id="CHEBI:15378"/>
        <dbReference type="ChEBI" id="CHEBI:57453"/>
        <dbReference type="ChEBI" id="CHEBI:78530"/>
        <dbReference type="ChEBI" id="CHEBI:78844"/>
        <dbReference type="ChEBI" id="CHEBI:195366"/>
        <dbReference type="EC" id="2.1.2.9"/>
    </reaction>
</comment>
<comment type="similarity">
    <text evidence="1">Belongs to the Fmt family.</text>
</comment>
<evidence type="ECO:0000255" key="1">
    <source>
        <dbReference type="HAMAP-Rule" id="MF_00182"/>
    </source>
</evidence>
<reference key="1">
    <citation type="journal article" date="2006" name="Genome Res.">
        <title>Skewed genomic variability in strains of the toxigenic bacterial pathogen, Clostridium perfringens.</title>
        <authorList>
            <person name="Myers G.S.A."/>
            <person name="Rasko D.A."/>
            <person name="Cheung J.K."/>
            <person name="Ravel J."/>
            <person name="Seshadri R."/>
            <person name="DeBoy R.T."/>
            <person name="Ren Q."/>
            <person name="Varga J."/>
            <person name="Awad M.M."/>
            <person name="Brinkac L.M."/>
            <person name="Daugherty S.C."/>
            <person name="Haft D.H."/>
            <person name="Dodson R.J."/>
            <person name="Madupu R."/>
            <person name="Nelson W.C."/>
            <person name="Rosovitz M.J."/>
            <person name="Sullivan S.A."/>
            <person name="Khouri H."/>
            <person name="Dimitrov G.I."/>
            <person name="Watkins K.L."/>
            <person name="Mulligan S."/>
            <person name="Benton J."/>
            <person name="Radune D."/>
            <person name="Fisher D.J."/>
            <person name="Atkins H.S."/>
            <person name="Hiscox T."/>
            <person name="Jost B.H."/>
            <person name="Billington S.J."/>
            <person name="Songer J.G."/>
            <person name="McClane B.A."/>
            <person name="Titball R.W."/>
            <person name="Rood J.I."/>
            <person name="Melville S.B."/>
            <person name="Paulsen I.T."/>
        </authorList>
    </citation>
    <scope>NUCLEOTIDE SEQUENCE [LARGE SCALE GENOMIC DNA]</scope>
    <source>
        <strain>SM101 / Type A</strain>
    </source>
</reference>
<proteinExistence type="inferred from homology"/>
<organism>
    <name type="scientific">Clostridium perfringens (strain SM101 / Type A)</name>
    <dbReference type="NCBI Taxonomy" id="289380"/>
    <lineage>
        <taxon>Bacteria</taxon>
        <taxon>Bacillati</taxon>
        <taxon>Bacillota</taxon>
        <taxon>Clostridia</taxon>
        <taxon>Eubacteriales</taxon>
        <taxon>Clostridiaceae</taxon>
        <taxon>Clostridium</taxon>
    </lineage>
</organism>
<dbReference type="EC" id="2.1.2.9" evidence="1"/>
<dbReference type="EMBL" id="CP000312">
    <property type="protein sequence ID" value="ABG85479.1"/>
    <property type="molecule type" value="Genomic_DNA"/>
</dbReference>
<dbReference type="RefSeq" id="WP_011592631.1">
    <property type="nucleotide sequence ID" value="NC_008262.1"/>
</dbReference>
<dbReference type="SMR" id="Q0SS78"/>
<dbReference type="KEGG" id="cpr:CPR_1714"/>
<dbReference type="Proteomes" id="UP000001824">
    <property type="component" value="Chromosome"/>
</dbReference>
<dbReference type="GO" id="GO:0005829">
    <property type="term" value="C:cytosol"/>
    <property type="evidence" value="ECO:0007669"/>
    <property type="project" value="TreeGrafter"/>
</dbReference>
<dbReference type="GO" id="GO:0004479">
    <property type="term" value="F:methionyl-tRNA formyltransferase activity"/>
    <property type="evidence" value="ECO:0007669"/>
    <property type="project" value="UniProtKB-UniRule"/>
</dbReference>
<dbReference type="CDD" id="cd08646">
    <property type="entry name" value="FMT_core_Met-tRNA-FMT_N"/>
    <property type="match status" value="1"/>
</dbReference>
<dbReference type="CDD" id="cd08704">
    <property type="entry name" value="Met_tRNA_FMT_C"/>
    <property type="match status" value="1"/>
</dbReference>
<dbReference type="FunFam" id="3.40.50.12230:FF:000001">
    <property type="entry name" value="Methionyl-tRNA formyltransferase"/>
    <property type="match status" value="1"/>
</dbReference>
<dbReference type="FunFam" id="3.40.50.170:FF:000004">
    <property type="entry name" value="Methionyl-tRNA formyltransferase"/>
    <property type="match status" value="1"/>
</dbReference>
<dbReference type="Gene3D" id="3.10.25.10">
    <property type="entry name" value="Formyl transferase, C-terminal domain"/>
    <property type="match status" value="1"/>
</dbReference>
<dbReference type="Gene3D" id="3.40.50.170">
    <property type="entry name" value="Formyl transferase, N-terminal domain"/>
    <property type="match status" value="1"/>
</dbReference>
<dbReference type="HAMAP" id="MF_00182">
    <property type="entry name" value="Formyl_trans"/>
    <property type="match status" value="1"/>
</dbReference>
<dbReference type="InterPro" id="IPR005794">
    <property type="entry name" value="Fmt"/>
</dbReference>
<dbReference type="InterPro" id="IPR005793">
    <property type="entry name" value="Formyl_trans_C"/>
</dbReference>
<dbReference type="InterPro" id="IPR037022">
    <property type="entry name" value="Formyl_trans_C_sf"/>
</dbReference>
<dbReference type="InterPro" id="IPR002376">
    <property type="entry name" value="Formyl_transf_N"/>
</dbReference>
<dbReference type="InterPro" id="IPR036477">
    <property type="entry name" value="Formyl_transf_N_sf"/>
</dbReference>
<dbReference type="InterPro" id="IPR011034">
    <property type="entry name" value="Formyl_transferase-like_C_sf"/>
</dbReference>
<dbReference type="InterPro" id="IPR001555">
    <property type="entry name" value="GART_AS"/>
</dbReference>
<dbReference type="InterPro" id="IPR044135">
    <property type="entry name" value="Met-tRNA-FMT_C"/>
</dbReference>
<dbReference type="InterPro" id="IPR041711">
    <property type="entry name" value="Met-tRNA-FMT_N"/>
</dbReference>
<dbReference type="NCBIfam" id="TIGR00460">
    <property type="entry name" value="fmt"/>
    <property type="match status" value="1"/>
</dbReference>
<dbReference type="PANTHER" id="PTHR11138">
    <property type="entry name" value="METHIONYL-TRNA FORMYLTRANSFERASE"/>
    <property type="match status" value="1"/>
</dbReference>
<dbReference type="PANTHER" id="PTHR11138:SF5">
    <property type="entry name" value="METHIONYL-TRNA FORMYLTRANSFERASE, MITOCHONDRIAL"/>
    <property type="match status" value="1"/>
</dbReference>
<dbReference type="Pfam" id="PF02911">
    <property type="entry name" value="Formyl_trans_C"/>
    <property type="match status" value="1"/>
</dbReference>
<dbReference type="Pfam" id="PF00551">
    <property type="entry name" value="Formyl_trans_N"/>
    <property type="match status" value="1"/>
</dbReference>
<dbReference type="SUPFAM" id="SSF50486">
    <property type="entry name" value="FMT C-terminal domain-like"/>
    <property type="match status" value="1"/>
</dbReference>
<dbReference type="SUPFAM" id="SSF53328">
    <property type="entry name" value="Formyltransferase"/>
    <property type="match status" value="1"/>
</dbReference>
<dbReference type="PROSITE" id="PS00373">
    <property type="entry name" value="GART"/>
    <property type="match status" value="1"/>
</dbReference>
<sequence>MKIVFMGTPDFAVPSLKSLINEFGVEAVFTQPDRPKGRGKKLGMSPVKEVALEHNIPVYQPLRLKNEPETIEELKNMEPDFIIVVAFGQILPKEVLDIPKYGCINLHASLLPKFRGAAPLNWSIIKGEKVTGNTTMLMDVGLDTGDMLLKDEVEITDNMTAGELHDILMERGGELLVRTIKGILNNEITPEKQNEEETCYAPMLNKEIAKIDWSLSAQDIHNLVRGLNPWPVALTSYDDITMKVHQTRVEKGESNKEPGTIIAVDKTGIKVSTGKDILVIEKLQFPNSKQLFVEQFINGNTIEVGKVLK</sequence>
<accession>Q0SS78</accession>
<gene>
    <name evidence="1" type="primary">fmt</name>
    <name type="ordered locus">CPR_1714</name>
</gene>
<protein>
    <recommendedName>
        <fullName evidence="1">Methionyl-tRNA formyltransferase</fullName>
        <ecNumber evidence="1">2.1.2.9</ecNumber>
    </recommendedName>
</protein>
<feature type="chain" id="PRO_1000020049" description="Methionyl-tRNA formyltransferase">
    <location>
        <begin position="1"/>
        <end position="309"/>
    </location>
</feature>
<feature type="binding site" evidence="1">
    <location>
        <begin position="109"/>
        <end position="112"/>
    </location>
    <ligand>
        <name>(6S)-5,6,7,8-tetrahydrofolate</name>
        <dbReference type="ChEBI" id="CHEBI:57453"/>
    </ligand>
</feature>
<name>FMT_CLOPS</name>
<keyword id="KW-0648">Protein biosynthesis</keyword>
<keyword id="KW-0808">Transferase</keyword>